<sequence>MATPSAIPTNSKRDTTAQFHRVTRGNRSLWYQLTVLQQPERARACGSGMKANSDRRPVDPPPVVELRIVEGPTLEEGKDVTFDYNANFFLYASLEHARPIASCRVSTPTTNNPPILTGVPASGMAYLDRPSEAGYFIFPDLSVRHEGLYRLTFSLFETTKEEQDFDIQPADGDLPPGVDFRMEIKTDPFSVFSAKKFPGLMESTQLSKTVADQGCRVRIRRDVRMRKRDTKSGGNNNNNNNAGNNAGNNGFERREEDFGRRRTVTPAAEDPHGIRNRSQSNSSEHRASYSDVSRRPSMVDSYPPPPPPPPSYDPTPSAPRHLAFGESSGPKYPAPRQYAHQPGLQITPVPANGPYPSAAQSPYAKTDAPYGYSRHLPPSCPSPAPSVNRDLYDRRQSTSTYVPPSPSVYSTEGHYRRDSQASYPPTPAAAPLPRMNTEPSRGSIKISALVEPMPVIEPQVDPLPELPPVNVGGKRKHESVFAQNTRPLFNGQRQMDPHYGRSHRGYSPDHDQGSYSRADGQISVIQFNKYEY</sequence>
<comment type="function">
    <text evidence="2 5 6">Component of the velvet transcription factor complex that controls sexual/asexual developmental ratio in response to light, promoting sexual development in the darkness while stimulating asexual sporulation under illumination (By similarity). The velvet complex hat acts as a global regulator for secondary metabolite gene expression (PubMed:22140571). Controls the expression of the aurofusarin and trichothecene gene clusters (PubMed:22013911). Also controls the expression of the deoxynivalenol (DON) gene cluster (PubMed:22140571). Regulates hyphal growth and pigment formation (PubMed:22140571). Acts as a positive regulator of virulence (PubMed:22013911, PubMed:22140571).</text>
</comment>
<comment type="subunit">
    <text evidence="1 8">Component of the heterotrimeric velvet complex composed of laeA, ve1 and velB; Ve1 acting as a bridging protein between laeA and velB (By similarity). Interacts directly with laeA and velB (PubMed:23874628).</text>
</comment>
<comment type="subcellular location">
    <subcellularLocation>
        <location evidence="2">Nucleus</location>
    </subcellularLocation>
    <subcellularLocation>
        <location evidence="2">Cytoplasm</location>
    </subcellularLocation>
    <text evidence="2">Enriched in the nucleus in the dark (By similarity).</text>
</comment>
<comment type="domain">
    <text evidence="2">The C-terminal PEST domain is a region rich in proline, glutamic acid, serine and threonine residues that is required for the light-dependent regulation of development and secondary metabolism (By similarity).</text>
</comment>
<comment type="disruption phenotype">
    <text evidence="5 6 7">Impairs aurofusarin and trichothecene biosynthesis (PubMed:22013911). Reduces deoxynivalenol (DON) biosynthesis (PubMed:22140571). Results in highly reduced sporulation (PubMed:22013911). Reduces the hydrophobicity of the cell surface (PubMed:22013911, PubMed:22140571). Shows increased resistance to osmotic stress and cell wall-damaging agents, but increased sensitivity to iprodione and fludioxonil fungicides (PubMed:22140571, PubMed:22713714).</text>
</comment>
<comment type="similarity">
    <text evidence="11">Belongs to the velvet family. VeA subfamily.</text>
</comment>
<name>VEA_GIBZE</name>
<organism>
    <name type="scientific">Gibberella zeae (strain ATCC MYA-4620 / CBS 123657 / FGSC 9075 / NRRL 31084 / PH-1)</name>
    <name type="common">Wheat head blight fungus</name>
    <name type="synonym">Fusarium graminearum</name>
    <dbReference type="NCBI Taxonomy" id="229533"/>
    <lineage>
        <taxon>Eukaryota</taxon>
        <taxon>Fungi</taxon>
        <taxon>Dikarya</taxon>
        <taxon>Ascomycota</taxon>
        <taxon>Pezizomycotina</taxon>
        <taxon>Sordariomycetes</taxon>
        <taxon>Hypocreomycetidae</taxon>
        <taxon>Hypocreales</taxon>
        <taxon>Nectriaceae</taxon>
        <taxon>Fusarium</taxon>
    </lineage>
</organism>
<gene>
    <name evidence="9" type="primary">ve1</name>
    <name evidence="10" type="synonym">veA</name>
    <name type="ORF">FGRAMPH1_01T03545</name>
    <name type="ORF">FGRRES_11955</name>
    <name type="ORF">FGSG_11955</name>
</gene>
<feature type="chain" id="PRO_0000435769" description="Developmental and secondary metabolism regulator ve1">
    <location>
        <begin position="1"/>
        <end position="532"/>
    </location>
</feature>
<feature type="domain" description="Velvet" evidence="3">
    <location>
        <begin position="26"/>
        <end position="220"/>
    </location>
</feature>
<feature type="region of interest" description="Disordered" evidence="4">
    <location>
        <begin position="217"/>
        <end position="440"/>
    </location>
</feature>
<feature type="region of interest" description="PEST" evidence="2">
    <location>
        <begin position="435"/>
        <end position="463"/>
    </location>
</feature>
<feature type="region of interest" description="Disordered" evidence="4">
    <location>
        <begin position="458"/>
        <end position="520"/>
    </location>
</feature>
<feature type="short sequence motif" description="Nuclear localization signal" evidence="12">
    <location>
        <begin position="40"/>
        <end position="45"/>
    </location>
</feature>
<feature type="compositionally biased region" description="Basic residues" evidence="4">
    <location>
        <begin position="217"/>
        <end position="229"/>
    </location>
</feature>
<feature type="compositionally biased region" description="Low complexity" evidence="4">
    <location>
        <begin position="233"/>
        <end position="250"/>
    </location>
</feature>
<feature type="compositionally biased region" description="Basic and acidic residues" evidence="4">
    <location>
        <begin position="251"/>
        <end position="260"/>
    </location>
</feature>
<feature type="compositionally biased region" description="Basic and acidic residues" evidence="4">
    <location>
        <begin position="283"/>
        <end position="294"/>
    </location>
</feature>
<feature type="compositionally biased region" description="Pro residues" evidence="4">
    <location>
        <begin position="302"/>
        <end position="317"/>
    </location>
</feature>
<feature type="compositionally biased region" description="Low complexity" evidence="4">
    <location>
        <begin position="397"/>
        <end position="411"/>
    </location>
</feature>
<feature type="compositionally biased region" description="Polar residues" evidence="4">
    <location>
        <begin position="481"/>
        <end position="493"/>
    </location>
</feature>
<protein>
    <recommendedName>
        <fullName evidence="11">Developmental and secondary metabolism regulator ve1</fullName>
    </recommendedName>
    <alternativeName>
        <fullName evidence="11">Velvet complex subunit 1</fullName>
    </alternativeName>
</protein>
<dbReference type="EMBL" id="DS231663">
    <property type="protein sequence ID" value="ESU06761.1"/>
    <property type="molecule type" value="Genomic_DNA"/>
</dbReference>
<dbReference type="EMBL" id="HG970332">
    <property type="protein sequence ID" value="SCB64241.1"/>
    <property type="molecule type" value="Genomic_DNA"/>
</dbReference>
<dbReference type="RefSeq" id="XP_011317246.1">
    <property type="nucleotide sequence ID" value="XM_011318944.1"/>
</dbReference>
<dbReference type="SMR" id="I1S537"/>
<dbReference type="STRING" id="229533.I1S537"/>
<dbReference type="GeneID" id="23558774"/>
<dbReference type="KEGG" id="fgr:FGSG_11955"/>
<dbReference type="VEuPathDB" id="FungiDB:FGRAMPH1_01G03545"/>
<dbReference type="eggNOG" id="ENOG502S0HV">
    <property type="taxonomic scope" value="Eukaryota"/>
</dbReference>
<dbReference type="HOGENOM" id="CLU_022491_2_0_1"/>
<dbReference type="InParanoid" id="I1S537"/>
<dbReference type="OrthoDB" id="121339at110618"/>
<dbReference type="Proteomes" id="UP000070720">
    <property type="component" value="Chromosome 1"/>
</dbReference>
<dbReference type="GO" id="GO:0005737">
    <property type="term" value="C:cytoplasm"/>
    <property type="evidence" value="ECO:0007669"/>
    <property type="project" value="UniProtKB-SubCell"/>
</dbReference>
<dbReference type="GO" id="GO:0005634">
    <property type="term" value="C:nucleus"/>
    <property type="evidence" value="ECO:0007669"/>
    <property type="project" value="UniProtKB-SubCell"/>
</dbReference>
<dbReference type="GO" id="GO:0030435">
    <property type="term" value="P:sporulation resulting in formation of a cellular spore"/>
    <property type="evidence" value="ECO:0007669"/>
    <property type="project" value="UniProtKB-KW"/>
</dbReference>
<dbReference type="FunFam" id="2.60.40.3960:FF:000001">
    <property type="entry name" value="Sexual development activator VeA"/>
    <property type="match status" value="1"/>
</dbReference>
<dbReference type="Gene3D" id="2.60.40.3960">
    <property type="entry name" value="Velvet domain"/>
    <property type="match status" value="1"/>
</dbReference>
<dbReference type="InterPro" id="IPR021740">
    <property type="entry name" value="Velvet"/>
</dbReference>
<dbReference type="InterPro" id="IPR037525">
    <property type="entry name" value="Velvet_dom"/>
</dbReference>
<dbReference type="InterPro" id="IPR038491">
    <property type="entry name" value="Velvet_dom_sf"/>
</dbReference>
<dbReference type="PANTHER" id="PTHR33572:SF14">
    <property type="entry name" value="DEVELOPMENTAL AND SECONDARY METABOLISM REGULATOR VEA"/>
    <property type="match status" value="1"/>
</dbReference>
<dbReference type="PANTHER" id="PTHR33572">
    <property type="entry name" value="SPORE DEVELOPMENT REGULATOR VOSA"/>
    <property type="match status" value="1"/>
</dbReference>
<dbReference type="Pfam" id="PF11754">
    <property type="entry name" value="Velvet"/>
    <property type="match status" value="2"/>
</dbReference>
<dbReference type="PROSITE" id="PS51821">
    <property type="entry name" value="VELVET"/>
    <property type="match status" value="1"/>
</dbReference>
<keyword id="KW-0963">Cytoplasm</keyword>
<keyword id="KW-0539">Nucleus</keyword>
<keyword id="KW-1185">Reference proteome</keyword>
<keyword id="KW-0749">Sporulation</keyword>
<keyword id="KW-0804">Transcription</keyword>
<keyword id="KW-0805">Transcription regulation</keyword>
<proteinExistence type="evidence at protein level"/>
<evidence type="ECO:0000250" key="1">
    <source>
        <dbReference type="UniProtKB" id="C8VQG9"/>
    </source>
</evidence>
<evidence type="ECO:0000250" key="2">
    <source>
        <dbReference type="UniProtKB" id="C8VTV4"/>
    </source>
</evidence>
<evidence type="ECO:0000255" key="3">
    <source>
        <dbReference type="PROSITE-ProRule" id="PRU01165"/>
    </source>
</evidence>
<evidence type="ECO:0000256" key="4">
    <source>
        <dbReference type="SAM" id="MobiDB-lite"/>
    </source>
</evidence>
<evidence type="ECO:0000269" key="5">
    <source>
    </source>
</evidence>
<evidence type="ECO:0000269" key="6">
    <source>
    </source>
</evidence>
<evidence type="ECO:0000269" key="7">
    <source>
    </source>
</evidence>
<evidence type="ECO:0000269" key="8">
    <source>
    </source>
</evidence>
<evidence type="ECO:0000303" key="9">
    <source>
    </source>
</evidence>
<evidence type="ECO:0000303" key="10">
    <source>
    </source>
</evidence>
<evidence type="ECO:0000305" key="11"/>
<evidence type="ECO:0000305" key="12">
    <source>
    </source>
</evidence>
<accession>I1S537</accession>
<accession>A0A098D3S4</accession>
<accession>A0A140TG13</accession>
<accession>A0A1C3YIF7</accession>
<reference key="1">
    <citation type="journal article" date="2007" name="Science">
        <title>The Fusarium graminearum genome reveals a link between localized polymorphism and pathogen specialization.</title>
        <authorList>
            <person name="Cuomo C.A."/>
            <person name="Gueldener U."/>
            <person name="Xu J.-R."/>
            <person name="Trail F."/>
            <person name="Turgeon B.G."/>
            <person name="Di Pietro A."/>
            <person name="Walton J.D."/>
            <person name="Ma L.-J."/>
            <person name="Baker S.E."/>
            <person name="Rep M."/>
            <person name="Adam G."/>
            <person name="Antoniw J."/>
            <person name="Baldwin T."/>
            <person name="Calvo S.E."/>
            <person name="Chang Y.-L."/>
            <person name="DeCaprio D."/>
            <person name="Gale L.R."/>
            <person name="Gnerre S."/>
            <person name="Goswami R.S."/>
            <person name="Hammond-Kosack K."/>
            <person name="Harris L.J."/>
            <person name="Hilburn K."/>
            <person name="Kennell J.C."/>
            <person name="Kroken S."/>
            <person name="Magnuson J.K."/>
            <person name="Mannhaupt G."/>
            <person name="Mauceli E.W."/>
            <person name="Mewes H.-W."/>
            <person name="Mitterbauer R."/>
            <person name="Muehlbauer G."/>
            <person name="Muensterkoetter M."/>
            <person name="Nelson D."/>
            <person name="O'Donnell K."/>
            <person name="Ouellet T."/>
            <person name="Qi W."/>
            <person name="Quesneville H."/>
            <person name="Roncero M.I.G."/>
            <person name="Seong K.-Y."/>
            <person name="Tetko I.V."/>
            <person name="Urban M."/>
            <person name="Waalwijk C."/>
            <person name="Ward T.J."/>
            <person name="Yao J."/>
            <person name="Birren B.W."/>
            <person name="Kistler H.C."/>
        </authorList>
    </citation>
    <scope>NUCLEOTIDE SEQUENCE [LARGE SCALE GENOMIC DNA]</scope>
    <source>
        <strain>ATCC MYA-4620 / CBS 123657 / FGSC 9075 / NRRL 31084 / PH-1</strain>
    </source>
</reference>
<reference key="2">
    <citation type="journal article" date="2010" name="Nature">
        <title>Comparative genomics reveals mobile pathogenicity chromosomes in Fusarium.</title>
        <authorList>
            <person name="Ma L.-J."/>
            <person name="van der Does H.C."/>
            <person name="Borkovich K.A."/>
            <person name="Coleman J.J."/>
            <person name="Daboussi M.-J."/>
            <person name="Di Pietro A."/>
            <person name="Dufresne M."/>
            <person name="Freitag M."/>
            <person name="Grabherr M."/>
            <person name="Henrissat B."/>
            <person name="Houterman P.M."/>
            <person name="Kang S."/>
            <person name="Shim W.-B."/>
            <person name="Woloshuk C."/>
            <person name="Xie X."/>
            <person name="Xu J.-R."/>
            <person name="Antoniw J."/>
            <person name="Baker S.E."/>
            <person name="Bluhm B.H."/>
            <person name="Breakspear A."/>
            <person name="Brown D.W."/>
            <person name="Butchko R.A.E."/>
            <person name="Chapman S."/>
            <person name="Coulson R."/>
            <person name="Coutinho P.M."/>
            <person name="Danchin E.G.J."/>
            <person name="Diener A."/>
            <person name="Gale L.R."/>
            <person name="Gardiner D.M."/>
            <person name="Goff S."/>
            <person name="Hammond-Kosack K.E."/>
            <person name="Hilburn K."/>
            <person name="Hua-Van A."/>
            <person name="Jonkers W."/>
            <person name="Kazan K."/>
            <person name="Kodira C.D."/>
            <person name="Koehrsen M."/>
            <person name="Kumar L."/>
            <person name="Lee Y.-H."/>
            <person name="Li L."/>
            <person name="Manners J.M."/>
            <person name="Miranda-Saavedra D."/>
            <person name="Mukherjee M."/>
            <person name="Park G."/>
            <person name="Park J."/>
            <person name="Park S.-Y."/>
            <person name="Proctor R.H."/>
            <person name="Regev A."/>
            <person name="Ruiz-Roldan M.C."/>
            <person name="Sain D."/>
            <person name="Sakthikumar S."/>
            <person name="Sykes S."/>
            <person name="Schwartz D.C."/>
            <person name="Turgeon B.G."/>
            <person name="Wapinski I."/>
            <person name="Yoder O."/>
            <person name="Young S."/>
            <person name="Zeng Q."/>
            <person name="Zhou S."/>
            <person name="Galagan J."/>
            <person name="Cuomo C.A."/>
            <person name="Kistler H.C."/>
            <person name="Rep M."/>
        </authorList>
    </citation>
    <scope>GENOME REANNOTATION</scope>
    <source>
        <strain>ATCC MYA-4620 / CBS 123657 / FGSC 9075 / NRRL 31084 / PH-1</strain>
    </source>
</reference>
<reference key="3">
    <citation type="journal article" date="2015" name="BMC Genomics">
        <title>The completed genome sequence of the pathogenic ascomycete fungus Fusarium graminearum.</title>
        <authorList>
            <person name="King R."/>
            <person name="Urban M."/>
            <person name="Hammond-Kosack M.C.U."/>
            <person name="Hassani-Pak K."/>
            <person name="Hammond-Kosack K.E."/>
        </authorList>
    </citation>
    <scope>NUCLEOTIDE SEQUENCE [LARGE SCALE GENOMIC DNA]</scope>
    <source>
        <strain>ATCC MYA-4620 / CBS 123657 / FGSC 9075 / NRRL 31084 / PH-1</strain>
    </source>
</reference>
<reference key="4">
    <citation type="journal article" date="2011" name="PLoS ONE">
        <title>Involvement of a velvet protein FgVeA in the regulation of asexual development, lipid and secondary metabolisms and virulence in Fusarium graminearum.</title>
        <authorList>
            <person name="Jiang J."/>
            <person name="Liu X."/>
            <person name="Yin Y."/>
            <person name="Ma Z."/>
        </authorList>
    </citation>
    <scope>FUNCTION</scope>
    <scope>DISRUPTION PHENOTYPE</scope>
</reference>
<reference key="5">
    <citation type="journal article" date="2012" name="Fungal Genet. Biol.">
        <title>FgVELB is associated with vegetative differentiation, secondary metabolism and virulence in Fusarium graminearum.</title>
        <authorList>
            <person name="Jiang J."/>
            <person name="Yun Y."/>
            <person name="Liu Y."/>
            <person name="Ma Z."/>
        </authorList>
    </citation>
    <scope>DISRUPTION PHENOTYPE</scope>
</reference>
<reference key="6">
    <citation type="journal article" date="2012" name="Mol. Plant Pathol.">
        <title>The velvet gene, FgVe1, affects fungal development and positively regulates trichothecene biosynthesis and pathogenicity in Fusarium graminearum.</title>
        <authorList>
            <person name="Merhej J."/>
            <person name="Urban M."/>
            <person name="Dufresne M."/>
            <person name="Hammond-Kosack K.E."/>
            <person name="Richard-Forget F."/>
            <person name="Barreau C."/>
        </authorList>
    </citation>
    <scope>FUNCTION</scope>
    <scope>DISRUPTION PHENOTYPE</scope>
</reference>
<reference key="7">
    <citation type="journal article" date="2013" name="PLoS ONE">
        <title>Functional roles of FgLaeA in controlling secondary metabolism, sexual development, and virulence in Fusarium graminearum.</title>
        <authorList>
            <person name="Kim H.K."/>
            <person name="Lee S."/>
            <person name="Jo S.M."/>
            <person name="McCormick S.P."/>
            <person name="Butchko R.A."/>
            <person name="Proctor R.H."/>
            <person name="Yun S.H."/>
        </authorList>
    </citation>
    <scope>INTERACTION WITH LAEA AND VELB</scope>
</reference>